<reference key="1">
    <citation type="journal article" date="2003" name="Genome Res.">
        <title>Comparative genome analysis of Vibrio vulnificus, a marine pathogen.</title>
        <authorList>
            <person name="Chen C.-Y."/>
            <person name="Wu K.-M."/>
            <person name="Chang Y.-C."/>
            <person name="Chang C.-H."/>
            <person name="Tsai H.-C."/>
            <person name="Liao T.-L."/>
            <person name="Liu Y.-M."/>
            <person name="Chen H.-J."/>
            <person name="Shen A.B.-T."/>
            <person name="Li J.-C."/>
            <person name="Su T.-L."/>
            <person name="Shao C.-P."/>
            <person name="Lee C.-T."/>
            <person name="Hor L.-I."/>
            <person name="Tsai S.-F."/>
        </authorList>
    </citation>
    <scope>NUCLEOTIDE SEQUENCE [LARGE SCALE GENOMIC DNA]</scope>
    <source>
        <strain>YJ016</strain>
    </source>
</reference>
<evidence type="ECO:0000255" key="1">
    <source>
        <dbReference type="HAMAP-Rule" id="MF_01139"/>
    </source>
</evidence>
<comment type="function">
    <text evidence="1">Catalyzes the sequential condensation of isopentenyl diphosphate (IPP) with (2E,6E)-farnesyl diphosphate (E,E-FPP) to yield (2Z,6Z,10Z,14Z,18Z,22Z,26Z,30Z,34E,38E)-undecaprenyl diphosphate (di-trans,octa-cis-UPP). UPP is the precursor of glycosyl carrier lipid in the biosynthesis of bacterial cell wall polysaccharide components such as peptidoglycan and lipopolysaccharide.</text>
</comment>
<comment type="catalytic activity">
    <reaction evidence="1">
        <text>8 isopentenyl diphosphate + (2E,6E)-farnesyl diphosphate = di-trans,octa-cis-undecaprenyl diphosphate + 8 diphosphate</text>
        <dbReference type="Rhea" id="RHEA:27551"/>
        <dbReference type="ChEBI" id="CHEBI:33019"/>
        <dbReference type="ChEBI" id="CHEBI:58405"/>
        <dbReference type="ChEBI" id="CHEBI:128769"/>
        <dbReference type="ChEBI" id="CHEBI:175763"/>
        <dbReference type="EC" id="2.5.1.31"/>
    </reaction>
</comment>
<comment type="cofactor">
    <cofactor evidence="1">
        <name>Mg(2+)</name>
        <dbReference type="ChEBI" id="CHEBI:18420"/>
    </cofactor>
    <text evidence="1">Binds 2 magnesium ions per subunit.</text>
</comment>
<comment type="subunit">
    <text evidence="1">Homodimer.</text>
</comment>
<comment type="similarity">
    <text evidence="1">Belongs to the UPP synthase family.</text>
</comment>
<sequence>MQNSQLFTESLPKHIAIIMDGNGRWAKSKGQPRVFGHKKGVSAVRKTIAAASKLNIQAITLFAFSSENWRRPEEEVGLLMELFITVLSSEVKKLHKNNLRLRIIGDTSRFSERLQKKIVEAQELTASNTGMVINVAANYGGKWDITQAVQKVAQQVALGDLSAEDITEDDIAKHLTMSDLPEVDLLIRTSGECRISNFMLWQMAYAEMYFTPVFWPDFGEESLIEAITWFVNRERRFGCTGEQIKALMSAQ</sequence>
<organism>
    <name type="scientific">Vibrio vulnificus (strain YJ016)</name>
    <dbReference type="NCBI Taxonomy" id="196600"/>
    <lineage>
        <taxon>Bacteria</taxon>
        <taxon>Pseudomonadati</taxon>
        <taxon>Pseudomonadota</taxon>
        <taxon>Gammaproteobacteria</taxon>
        <taxon>Vibrionales</taxon>
        <taxon>Vibrionaceae</taxon>
        <taxon>Vibrio</taxon>
    </lineage>
</organism>
<name>UPPS_VIBVY</name>
<feature type="chain" id="PRO_0000123715" description="Ditrans,polycis-undecaprenyl-diphosphate synthase ((2E,6E)-farnesyl-diphosphate specific)">
    <location>
        <begin position="1"/>
        <end position="251"/>
    </location>
</feature>
<feature type="active site" evidence="1">
    <location>
        <position position="20"/>
    </location>
</feature>
<feature type="active site" description="Proton acceptor" evidence="1">
    <location>
        <position position="68"/>
    </location>
</feature>
<feature type="binding site" evidence="1">
    <location>
        <position position="20"/>
    </location>
    <ligand>
        <name>Mg(2+)</name>
        <dbReference type="ChEBI" id="CHEBI:18420"/>
    </ligand>
</feature>
<feature type="binding site" evidence="1">
    <location>
        <begin position="21"/>
        <end position="24"/>
    </location>
    <ligand>
        <name>substrate</name>
    </ligand>
</feature>
<feature type="binding site" evidence="1">
    <location>
        <position position="25"/>
    </location>
    <ligand>
        <name>substrate</name>
    </ligand>
</feature>
<feature type="binding site" evidence="1">
    <location>
        <position position="33"/>
    </location>
    <ligand>
        <name>substrate</name>
    </ligand>
</feature>
<feature type="binding site" evidence="1">
    <location>
        <position position="37"/>
    </location>
    <ligand>
        <name>substrate</name>
    </ligand>
</feature>
<feature type="binding site" evidence="1">
    <location>
        <begin position="65"/>
        <end position="67"/>
    </location>
    <ligand>
        <name>substrate</name>
    </ligand>
</feature>
<feature type="binding site" evidence="1">
    <location>
        <position position="69"/>
    </location>
    <ligand>
        <name>substrate</name>
    </ligand>
</feature>
<feature type="binding site" evidence="1">
    <location>
        <position position="71"/>
    </location>
    <ligand>
        <name>substrate</name>
    </ligand>
</feature>
<feature type="binding site" evidence="1">
    <location>
        <position position="188"/>
    </location>
    <ligand>
        <name>substrate</name>
    </ligand>
</feature>
<feature type="binding site" evidence="1">
    <location>
        <begin position="194"/>
        <end position="196"/>
    </location>
    <ligand>
        <name>substrate</name>
    </ligand>
</feature>
<feature type="binding site" evidence="1">
    <location>
        <position position="207"/>
    </location>
    <ligand>
        <name>Mg(2+)</name>
        <dbReference type="ChEBI" id="CHEBI:18420"/>
    </ligand>
</feature>
<keyword id="KW-0133">Cell shape</keyword>
<keyword id="KW-0961">Cell wall biogenesis/degradation</keyword>
<keyword id="KW-0460">Magnesium</keyword>
<keyword id="KW-0479">Metal-binding</keyword>
<keyword id="KW-0573">Peptidoglycan synthesis</keyword>
<keyword id="KW-0808">Transferase</keyword>
<gene>
    <name evidence="1" type="primary">uppS</name>
    <name type="ordered locus">VV2553</name>
</gene>
<proteinExistence type="inferred from homology"/>
<accession>Q7MIG4</accession>
<dbReference type="EC" id="2.5.1.31" evidence="1"/>
<dbReference type="EMBL" id="BA000037">
    <property type="protein sequence ID" value="BAC95317.1"/>
    <property type="molecule type" value="Genomic_DNA"/>
</dbReference>
<dbReference type="RefSeq" id="WP_011079766.1">
    <property type="nucleotide sequence ID" value="NC_005139.1"/>
</dbReference>
<dbReference type="SMR" id="Q7MIG4"/>
<dbReference type="STRING" id="672.VV93_v1c22720"/>
<dbReference type="KEGG" id="vvy:VV2553"/>
<dbReference type="eggNOG" id="COG0020">
    <property type="taxonomic scope" value="Bacteria"/>
</dbReference>
<dbReference type="HOGENOM" id="CLU_038505_1_1_6"/>
<dbReference type="Proteomes" id="UP000002675">
    <property type="component" value="Chromosome I"/>
</dbReference>
<dbReference type="GO" id="GO:0005829">
    <property type="term" value="C:cytosol"/>
    <property type="evidence" value="ECO:0007669"/>
    <property type="project" value="TreeGrafter"/>
</dbReference>
<dbReference type="GO" id="GO:0008834">
    <property type="term" value="F:ditrans,polycis-undecaprenyl-diphosphate synthase [(2E,6E)-farnesyl-diphosphate specific] activity"/>
    <property type="evidence" value="ECO:0007669"/>
    <property type="project" value="UniProtKB-UniRule"/>
</dbReference>
<dbReference type="GO" id="GO:0000287">
    <property type="term" value="F:magnesium ion binding"/>
    <property type="evidence" value="ECO:0007669"/>
    <property type="project" value="UniProtKB-UniRule"/>
</dbReference>
<dbReference type="GO" id="GO:0071555">
    <property type="term" value="P:cell wall organization"/>
    <property type="evidence" value="ECO:0007669"/>
    <property type="project" value="UniProtKB-KW"/>
</dbReference>
<dbReference type="GO" id="GO:0009252">
    <property type="term" value="P:peptidoglycan biosynthetic process"/>
    <property type="evidence" value="ECO:0007669"/>
    <property type="project" value="UniProtKB-UniRule"/>
</dbReference>
<dbReference type="GO" id="GO:0016094">
    <property type="term" value="P:polyprenol biosynthetic process"/>
    <property type="evidence" value="ECO:0007669"/>
    <property type="project" value="TreeGrafter"/>
</dbReference>
<dbReference type="GO" id="GO:0008360">
    <property type="term" value="P:regulation of cell shape"/>
    <property type="evidence" value="ECO:0007669"/>
    <property type="project" value="UniProtKB-KW"/>
</dbReference>
<dbReference type="CDD" id="cd00475">
    <property type="entry name" value="Cis_IPPS"/>
    <property type="match status" value="1"/>
</dbReference>
<dbReference type="FunFam" id="3.40.1180.10:FF:000001">
    <property type="entry name" value="(2E,6E)-farnesyl-diphosphate-specific ditrans,polycis-undecaprenyl-diphosphate synthase"/>
    <property type="match status" value="1"/>
</dbReference>
<dbReference type="Gene3D" id="3.40.1180.10">
    <property type="entry name" value="Decaprenyl diphosphate synthase-like"/>
    <property type="match status" value="1"/>
</dbReference>
<dbReference type="HAMAP" id="MF_01139">
    <property type="entry name" value="ISPT"/>
    <property type="match status" value="1"/>
</dbReference>
<dbReference type="InterPro" id="IPR001441">
    <property type="entry name" value="UPP_synth-like"/>
</dbReference>
<dbReference type="InterPro" id="IPR018520">
    <property type="entry name" value="UPP_synth-like_CS"/>
</dbReference>
<dbReference type="InterPro" id="IPR036424">
    <property type="entry name" value="UPP_synth-like_sf"/>
</dbReference>
<dbReference type="NCBIfam" id="NF011405">
    <property type="entry name" value="PRK14830.1"/>
    <property type="match status" value="1"/>
</dbReference>
<dbReference type="NCBIfam" id="TIGR00055">
    <property type="entry name" value="uppS"/>
    <property type="match status" value="1"/>
</dbReference>
<dbReference type="PANTHER" id="PTHR10291:SF0">
    <property type="entry name" value="DEHYDRODOLICHYL DIPHOSPHATE SYNTHASE 2"/>
    <property type="match status" value="1"/>
</dbReference>
<dbReference type="PANTHER" id="PTHR10291">
    <property type="entry name" value="DEHYDRODOLICHYL DIPHOSPHATE SYNTHASE FAMILY MEMBER"/>
    <property type="match status" value="1"/>
</dbReference>
<dbReference type="Pfam" id="PF01255">
    <property type="entry name" value="Prenyltransf"/>
    <property type="match status" value="1"/>
</dbReference>
<dbReference type="SUPFAM" id="SSF64005">
    <property type="entry name" value="Undecaprenyl diphosphate synthase"/>
    <property type="match status" value="1"/>
</dbReference>
<dbReference type="PROSITE" id="PS01066">
    <property type="entry name" value="UPP_SYNTHASE"/>
    <property type="match status" value="1"/>
</dbReference>
<protein>
    <recommendedName>
        <fullName evidence="1">Ditrans,polycis-undecaprenyl-diphosphate synthase ((2E,6E)-farnesyl-diphosphate specific)</fullName>
        <ecNumber evidence="1">2.5.1.31</ecNumber>
    </recommendedName>
    <alternativeName>
        <fullName evidence="1">Ditrans,polycis-undecaprenylcistransferase</fullName>
    </alternativeName>
    <alternativeName>
        <fullName evidence="1">Undecaprenyl diphosphate synthase</fullName>
        <shortName evidence="1">UDS</shortName>
    </alternativeName>
    <alternativeName>
        <fullName evidence="1">Undecaprenyl pyrophosphate synthase</fullName>
        <shortName evidence="1">UPP synthase</shortName>
    </alternativeName>
</protein>